<sequence length="201" mass="21963">MQTSPLLTQLMEALRCLPGVGPKSAQRMAFTLLQRDRSGGMRLAQALTRAMSEIGHCADCRTFTEQEVCNICSNPRRQENGQICVVESPADIYAIEQTGQFSGRYFVLMGHLSPLDGIGPDDIGLDRLEQRLAEEKITEVILATNPTVEGEATANYIAELCAQYDVEASRIAHGVPVGGELEMVDGTTLSHSLAGRHKIRF</sequence>
<proteinExistence type="inferred from homology"/>
<keyword id="KW-0227">DNA damage</keyword>
<keyword id="KW-0233">DNA recombination</keyword>
<keyword id="KW-0234">DNA repair</keyword>
<keyword id="KW-0479">Metal-binding</keyword>
<keyword id="KW-0862">Zinc</keyword>
<keyword id="KW-0863">Zinc-finger</keyword>
<feature type="chain" id="PRO_1000001538" description="Recombination protein RecR">
    <location>
        <begin position="1"/>
        <end position="201"/>
    </location>
</feature>
<feature type="domain" description="Toprim" evidence="1">
    <location>
        <begin position="81"/>
        <end position="176"/>
    </location>
</feature>
<feature type="zinc finger region" description="C4-type" evidence="1">
    <location>
        <begin position="57"/>
        <end position="72"/>
    </location>
</feature>
<comment type="function">
    <text evidence="1">May play a role in DNA repair. It seems to be involved in an RecBC-independent recombinational process of DNA repair. It may act with RecF and RecO.</text>
</comment>
<comment type="similarity">
    <text evidence="1">Belongs to the RecR family.</text>
</comment>
<protein>
    <recommendedName>
        <fullName evidence="1">Recombination protein RecR</fullName>
    </recommendedName>
</protein>
<name>RECR_ECOUT</name>
<dbReference type="EMBL" id="CP000243">
    <property type="protein sequence ID" value="ABE06001.1"/>
    <property type="molecule type" value="Genomic_DNA"/>
</dbReference>
<dbReference type="RefSeq" id="WP_001195025.1">
    <property type="nucleotide sequence ID" value="NZ_CP064825.1"/>
</dbReference>
<dbReference type="SMR" id="Q1RF63"/>
<dbReference type="GeneID" id="93776978"/>
<dbReference type="KEGG" id="eci:UTI89_C0500"/>
<dbReference type="HOGENOM" id="CLU_060739_1_2_6"/>
<dbReference type="Proteomes" id="UP000001952">
    <property type="component" value="Chromosome"/>
</dbReference>
<dbReference type="GO" id="GO:0003677">
    <property type="term" value="F:DNA binding"/>
    <property type="evidence" value="ECO:0007669"/>
    <property type="project" value="UniProtKB-UniRule"/>
</dbReference>
<dbReference type="GO" id="GO:0008270">
    <property type="term" value="F:zinc ion binding"/>
    <property type="evidence" value="ECO:0007669"/>
    <property type="project" value="UniProtKB-KW"/>
</dbReference>
<dbReference type="GO" id="GO:0006310">
    <property type="term" value="P:DNA recombination"/>
    <property type="evidence" value="ECO:0007669"/>
    <property type="project" value="UniProtKB-UniRule"/>
</dbReference>
<dbReference type="GO" id="GO:0006281">
    <property type="term" value="P:DNA repair"/>
    <property type="evidence" value="ECO:0007669"/>
    <property type="project" value="UniProtKB-UniRule"/>
</dbReference>
<dbReference type="CDD" id="cd01025">
    <property type="entry name" value="TOPRIM_recR"/>
    <property type="match status" value="1"/>
</dbReference>
<dbReference type="FunFam" id="1.10.8.420:FF:000001">
    <property type="entry name" value="Recombination protein RecR"/>
    <property type="match status" value="1"/>
</dbReference>
<dbReference type="FunFam" id="3.40.1360.10:FF:000001">
    <property type="entry name" value="Recombination protein RecR"/>
    <property type="match status" value="1"/>
</dbReference>
<dbReference type="Gene3D" id="3.40.1360.10">
    <property type="match status" value="1"/>
</dbReference>
<dbReference type="Gene3D" id="6.10.250.240">
    <property type="match status" value="1"/>
</dbReference>
<dbReference type="Gene3D" id="1.10.8.420">
    <property type="entry name" value="RecR Domain 1"/>
    <property type="match status" value="1"/>
</dbReference>
<dbReference type="HAMAP" id="MF_00017">
    <property type="entry name" value="RecR"/>
    <property type="match status" value="1"/>
</dbReference>
<dbReference type="InterPro" id="IPR000093">
    <property type="entry name" value="DNA_Rcmb_RecR"/>
</dbReference>
<dbReference type="InterPro" id="IPR023627">
    <property type="entry name" value="Rcmb_RecR"/>
</dbReference>
<dbReference type="InterPro" id="IPR015967">
    <property type="entry name" value="Rcmb_RecR_Znf"/>
</dbReference>
<dbReference type="InterPro" id="IPR006171">
    <property type="entry name" value="TOPRIM_dom"/>
</dbReference>
<dbReference type="InterPro" id="IPR034137">
    <property type="entry name" value="TOPRIM_RecR"/>
</dbReference>
<dbReference type="NCBIfam" id="TIGR00615">
    <property type="entry name" value="recR"/>
    <property type="match status" value="1"/>
</dbReference>
<dbReference type="PANTHER" id="PTHR30446">
    <property type="entry name" value="RECOMBINATION PROTEIN RECR"/>
    <property type="match status" value="1"/>
</dbReference>
<dbReference type="PANTHER" id="PTHR30446:SF0">
    <property type="entry name" value="RECOMBINATION PROTEIN RECR"/>
    <property type="match status" value="1"/>
</dbReference>
<dbReference type="Pfam" id="PF21175">
    <property type="entry name" value="RecR_C"/>
    <property type="match status" value="1"/>
</dbReference>
<dbReference type="Pfam" id="PF21176">
    <property type="entry name" value="RecR_HhH"/>
    <property type="match status" value="1"/>
</dbReference>
<dbReference type="Pfam" id="PF02132">
    <property type="entry name" value="RecR_ZnF"/>
    <property type="match status" value="1"/>
</dbReference>
<dbReference type="Pfam" id="PF13662">
    <property type="entry name" value="Toprim_4"/>
    <property type="match status" value="1"/>
</dbReference>
<dbReference type="SMART" id="SM00493">
    <property type="entry name" value="TOPRIM"/>
    <property type="match status" value="1"/>
</dbReference>
<dbReference type="SUPFAM" id="SSF111304">
    <property type="entry name" value="Recombination protein RecR"/>
    <property type="match status" value="1"/>
</dbReference>
<dbReference type="PROSITE" id="PS01300">
    <property type="entry name" value="RECR"/>
    <property type="match status" value="1"/>
</dbReference>
<dbReference type="PROSITE" id="PS50880">
    <property type="entry name" value="TOPRIM"/>
    <property type="match status" value="1"/>
</dbReference>
<accession>Q1RF63</accession>
<evidence type="ECO:0000255" key="1">
    <source>
        <dbReference type="HAMAP-Rule" id="MF_00017"/>
    </source>
</evidence>
<gene>
    <name evidence="1" type="primary">recR</name>
    <name type="ordered locus">UTI89_C0500</name>
</gene>
<reference key="1">
    <citation type="journal article" date="2006" name="Proc. Natl. Acad. Sci. U.S.A.">
        <title>Identification of genes subject to positive selection in uropathogenic strains of Escherichia coli: a comparative genomics approach.</title>
        <authorList>
            <person name="Chen S.L."/>
            <person name="Hung C.-S."/>
            <person name="Xu J."/>
            <person name="Reigstad C.S."/>
            <person name="Magrini V."/>
            <person name="Sabo A."/>
            <person name="Blasiar D."/>
            <person name="Bieri T."/>
            <person name="Meyer R.R."/>
            <person name="Ozersky P."/>
            <person name="Armstrong J.R."/>
            <person name="Fulton R.S."/>
            <person name="Latreille J.P."/>
            <person name="Spieth J."/>
            <person name="Hooton T.M."/>
            <person name="Mardis E.R."/>
            <person name="Hultgren S.J."/>
            <person name="Gordon J.I."/>
        </authorList>
    </citation>
    <scope>NUCLEOTIDE SEQUENCE [LARGE SCALE GENOMIC DNA]</scope>
    <source>
        <strain>UTI89 / UPEC</strain>
    </source>
</reference>
<organism>
    <name type="scientific">Escherichia coli (strain UTI89 / UPEC)</name>
    <dbReference type="NCBI Taxonomy" id="364106"/>
    <lineage>
        <taxon>Bacteria</taxon>
        <taxon>Pseudomonadati</taxon>
        <taxon>Pseudomonadota</taxon>
        <taxon>Gammaproteobacteria</taxon>
        <taxon>Enterobacterales</taxon>
        <taxon>Enterobacteriaceae</taxon>
        <taxon>Escherichia</taxon>
    </lineage>
</organism>